<proteinExistence type="inferred from homology"/>
<evidence type="ECO:0000255" key="1">
    <source>
        <dbReference type="HAMAP-Rule" id="MF_00034"/>
    </source>
</evidence>
<name>RUVC_BRASO</name>
<reference key="1">
    <citation type="journal article" date="2007" name="Science">
        <title>Legumes symbioses: absence of nod genes in photosynthetic bradyrhizobia.</title>
        <authorList>
            <person name="Giraud E."/>
            <person name="Moulin L."/>
            <person name="Vallenet D."/>
            <person name="Barbe V."/>
            <person name="Cytryn E."/>
            <person name="Avarre J.-C."/>
            <person name="Jaubert M."/>
            <person name="Simon D."/>
            <person name="Cartieaux F."/>
            <person name="Prin Y."/>
            <person name="Bena G."/>
            <person name="Hannibal L."/>
            <person name="Fardoux J."/>
            <person name="Kojadinovic M."/>
            <person name="Vuillet L."/>
            <person name="Lajus A."/>
            <person name="Cruveiller S."/>
            <person name="Rouy Z."/>
            <person name="Mangenot S."/>
            <person name="Segurens B."/>
            <person name="Dossat C."/>
            <person name="Franck W.L."/>
            <person name="Chang W.-S."/>
            <person name="Saunders E."/>
            <person name="Bruce D."/>
            <person name="Richardson P."/>
            <person name="Normand P."/>
            <person name="Dreyfus B."/>
            <person name="Pignol D."/>
            <person name="Stacey G."/>
            <person name="Emerich D."/>
            <person name="Vermeglio A."/>
            <person name="Medigue C."/>
            <person name="Sadowsky M."/>
        </authorList>
    </citation>
    <scope>NUCLEOTIDE SEQUENCE [LARGE SCALE GENOMIC DNA]</scope>
    <source>
        <strain>ORS 278</strain>
    </source>
</reference>
<accession>A4YMC5</accession>
<gene>
    <name evidence="1" type="primary">ruvC</name>
    <name type="ordered locus">BRADO1144</name>
</gene>
<organism>
    <name type="scientific">Bradyrhizobium sp. (strain ORS 278)</name>
    <dbReference type="NCBI Taxonomy" id="114615"/>
    <lineage>
        <taxon>Bacteria</taxon>
        <taxon>Pseudomonadati</taxon>
        <taxon>Pseudomonadota</taxon>
        <taxon>Alphaproteobacteria</taxon>
        <taxon>Hyphomicrobiales</taxon>
        <taxon>Nitrobacteraceae</taxon>
        <taxon>Bradyrhizobium</taxon>
    </lineage>
</organism>
<dbReference type="EC" id="3.1.21.10" evidence="1"/>
<dbReference type="EMBL" id="CU234118">
    <property type="protein sequence ID" value="CAL75051.1"/>
    <property type="molecule type" value="Genomic_DNA"/>
</dbReference>
<dbReference type="RefSeq" id="WP_011924295.1">
    <property type="nucleotide sequence ID" value="NC_009445.1"/>
</dbReference>
<dbReference type="SMR" id="A4YMC5"/>
<dbReference type="STRING" id="114615.BRADO1144"/>
<dbReference type="KEGG" id="bra:BRADO1144"/>
<dbReference type="eggNOG" id="COG0817">
    <property type="taxonomic scope" value="Bacteria"/>
</dbReference>
<dbReference type="HOGENOM" id="CLU_091257_1_0_5"/>
<dbReference type="OrthoDB" id="9805499at2"/>
<dbReference type="Proteomes" id="UP000001994">
    <property type="component" value="Chromosome"/>
</dbReference>
<dbReference type="GO" id="GO:0005737">
    <property type="term" value="C:cytoplasm"/>
    <property type="evidence" value="ECO:0007669"/>
    <property type="project" value="UniProtKB-SubCell"/>
</dbReference>
<dbReference type="GO" id="GO:0048476">
    <property type="term" value="C:Holliday junction resolvase complex"/>
    <property type="evidence" value="ECO:0007669"/>
    <property type="project" value="UniProtKB-UniRule"/>
</dbReference>
<dbReference type="GO" id="GO:0008821">
    <property type="term" value="F:crossover junction DNA endonuclease activity"/>
    <property type="evidence" value="ECO:0007669"/>
    <property type="project" value="UniProtKB-UniRule"/>
</dbReference>
<dbReference type="GO" id="GO:0003677">
    <property type="term" value="F:DNA binding"/>
    <property type="evidence" value="ECO:0007669"/>
    <property type="project" value="UniProtKB-KW"/>
</dbReference>
<dbReference type="GO" id="GO:0000287">
    <property type="term" value="F:magnesium ion binding"/>
    <property type="evidence" value="ECO:0007669"/>
    <property type="project" value="UniProtKB-UniRule"/>
</dbReference>
<dbReference type="GO" id="GO:0006310">
    <property type="term" value="P:DNA recombination"/>
    <property type="evidence" value="ECO:0007669"/>
    <property type="project" value="UniProtKB-UniRule"/>
</dbReference>
<dbReference type="GO" id="GO:0006281">
    <property type="term" value="P:DNA repair"/>
    <property type="evidence" value="ECO:0007669"/>
    <property type="project" value="UniProtKB-UniRule"/>
</dbReference>
<dbReference type="CDD" id="cd16962">
    <property type="entry name" value="RuvC"/>
    <property type="match status" value="1"/>
</dbReference>
<dbReference type="FunFam" id="3.30.420.10:FF:000002">
    <property type="entry name" value="Crossover junction endodeoxyribonuclease RuvC"/>
    <property type="match status" value="1"/>
</dbReference>
<dbReference type="Gene3D" id="3.30.420.10">
    <property type="entry name" value="Ribonuclease H-like superfamily/Ribonuclease H"/>
    <property type="match status" value="1"/>
</dbReference>
<dbReference type="HAMAP" id="MF_00034">
    <property type="entry name" value="RuvC"/>
    <property type="match status" value="1"/>
</dbReference>
<dbReference type="InterPro" id="IPR012337">
    <property type="entry name" value="RNaseH-like_sf"/>
</dbReference>
<dbReference type="InterPro" id="IPR036397">
    <property type="entry name" value="RNaseH_sf"/>
</dbReference>
<dbReference type="InterPro" id="IPR020563">
    <property type="entry name" value="X-over_junc_endoDNase_Mg_BS"/>
</dbReference>
<dbReference type="InterPro" id="IPR002176">
    <property type="entry name" value="X-over_junc_endoDNase_RuvC"/>
</dbReference>
<dbReference type="NCBIfam" id="TIGR00228">
    <property type="entry name" value="ruvC"/>
    <property type="match status" value="1"/>
</dbReference>
<dbReference type="PANTHER" id="PTHR30194">
    <property type="entry name" value="CROSSOVER JUNCTION ENDODEOXYRIBONUCLEASE RUVC"/>
    <property type="match status" value="1"/>
</dbReference>
<dbReference type="PANTHER" id="PTHR30194:SF3">
    <property type="entry name" value="CROSSOVER JUNCTION ENDODEOXYRIBONUCLEASE RUVC"/>
    <property type="match status" value="1"/>
</dbReference>
<dbReference type="Pfam" id="PF02075">
    <property type="entry name" value="RuvC"/>
    <property type="match status" value="1"/>
</dbReference>
<dbReference type="PRINTS" id="PR00696">
    <property type="entry name" value="RSOLVASERUVC"/>
</dbReference>
<dbReference type="SUPFAM" id="SSF53098">
    <property type="entry name" value="Ribonuclease H-like"/>
    <property type="match status" value="1"/>
</dbReference>
<dbReference type="PROSITE" id="PS01321">
    <property type="entry name" value="RUVC"/>
    <property type="match status" value="1"/>
</dbReference>
<sequence>MKAQPIRAAIRIIGIDPGLRRTGWGVIESEGNRLIYVGCGSVEPPDDLPLASRLLAIHEGLAKVLADFQPLEAAVEQTFVNKDGVATLKLGQARGIAMLAPAMFGITVAEYAPNQVKKTVVGAGHADKGQIAVMLKILLPKAEPPSADAADALAIAITHAHHRQGQALRMKVAGL</sequence>
<keyword id="KW-0963">Cytoplasm</keyword>
<keyword id="KW-0227">DNA damage</keyword>
<keyword id="KW-0233">DNA recombination</keyword>
<keyword id="KW-0234">DNA repair</keyword>
<keyword id="KW-0238">DNA-binding</keyword>
<keyword id="KW-0255">Endonuclease</keyword>
<keyword id="KW-0378">Hydrolase</keyword>
<keyword id="KW-0460">Magnesium</keyword>
<keyword id="KW-0479">Metal-binding</keyword>
<keyword id="KW-0540">Nuclease</keyword>
<keyword id="KW-1185">Reference proteome</keyword>
<feature type="chain" id="PRO_1000002724" description="Crossover junction endodeoxyribonuclease RuvC">
    <location>
        <begin position="1"/>
        <end position="175"/>
    </location>
</feature>
<feature type="active site" evidence="1">
    <location>
        <position position="16"/>
    </location>
</feature>
<feature type="active site" evidence="1">
    <location>
        <position position="76"/>
    </location>
</feature>
<feature type="active site" evidence="1">
    <location>
        <position position="148"/>
    </location>
</feature>
<feature type="binding site" evidence="1">
    <location>
        <position position="16"/>
    </location>
    <ligand>
        <name>Mg(2+)</name>
        <dbReference type="ChEBI" id="CHEBI:18420"/>
        <label>1</label>
    </ligand>
</feature>
<feature type="binding site" evidence="1">
    <location>
        <position position="76"/>
    </location>
    <ligand>
        <name>Mg(2+)</name>
        <dbReference type="ChEBI" id="CHEBI:18420"/>
        <label>2</label>
    </ligand>
</feature>
<feature type="binding site" evidence="1">
    <location>
        <position position="148"/>
    </location>
    <ligand>
        <name>Mg(2+)</name>
        <dbReference type="ChEBI" id="CHEBI:18420"/>
        <label>1</label>
    </ligand>
</feature>
<comment type="function">
    <text evidence="1">The RuvA-RuvB-RuvC complex processes Holliday junction (HJ) DNA during genetic recombination and DNA repair. Endonuclease that resolves HJ intermediates. Cleaves cruciform DNA by making single-stranded nicks across the HJ at symmetrical positions within the homologous arms, yielding a 5'-phosphate and a 3'-hydroxyl group; requires a central core of homology in the junction. The consensus cleavage sequence is 5'-(A/T)TT(C/G)-3'. Cleavage occurs on the 3'-side of the TT dinucleotide at the point of strand exchange. HJ branch migration catalyzed by RuvA-RuvB allows RuvC to scan DNA until it finds its consensus sequence, where it cleaves and resolves the cruciform DNA.</text>
</comment>
<comment type="catalytic activity">
    <reaction evidence="1">
        <text>Endonucleolytic cleavage at a junction such as a reciprocal single-stranded crossover between two homologous DNA duplexes (Holliday junction).</text>
        <dbReference type="EC" id="3.1.21.10"/>
    </reaction>
</comment>
<comment type="cofactor">
    <cofactor evidence="1">
        <name>Mg(2+)</name>
        <dbReference type="ChEBI" id="CHEBI:18420"/>
    </cofactor>
    <text evidence="1">Binds 2 Mg(2+) ion per subunit.</text>
</comment>
<comment type="subunit">
    <text evidence="1">Homodimer which binds Holliday junction (HJ) DNA. The HJ becomes 2-fold symmetrical on binding to RuvC with unstacked arms; it has a different conformation from HJ DNA in complex with RuvA. In the full resolvosome a probable DNA-RuvA(4)-RuvB(12)-RuvC(2) complex forms which resolves the HJ.</text>
</comment>
<comment type="subcellular location">
    <subcellularLocation>
        <location evidence="1">Cytoplasm</location>
    </subcellularLocation>
</comment>
<comment type="similarity">
    <text evidence="1">Belongs to the RuvC family.</text>
</comment>
<protein>
    <recommendedName>
        <fullName evidence="1">Crossover junction endodeoxyribonuclease RuvC</fullName>
        <ecNumber evidence="1">3.1.21.10</ecNumber>
    </recommendedName>
    <alternativeName>
        <fullName evidence="1">Holliday junction nuclease RuvC</fullName>
    </alternativeName>
    <alternativeName>
        <fullName evidence="1">Holliday junction resolvase RuvC</fullName>
    </alternativeName>
</protein>